<accession>Q32KN5</accession>
<gene>
    <name type="primary">DNAL4</name>
</gene>
<protein>
    <recommendedName>
        <fullName>Dynein axonemal light chain 4</fullName>
    </recommendedName>
</protein>
<reference key="1">
    <citation type="submission" date="2005-11" db="EMBL/GenBank/DDBJ databases">
        <authorList>
            <consortium name="NIH - Mammalian Gene Collection (MGC) project"/>
        </authorList>
    </citation>
    <scope>NUCLEOTIDE SEQUENCE [LARGE SCALE MRNA]</scope>
    <source>
        <strain>Crossbred X Angus</strain>
        <tissue>Liver</tissue>
    </source>
</reference>
<dbReference type="EMBL" id="BC110007">
    <property type="protein sequence ID" value="AAI10008.1"/>
    <property type="molecule type" value="mRNA"/>
</dbReference>
<dbReference type="RefSeq" id="NP_001074387.1">
    <property type="nucleotide sequence ID" value="NM_001080918.1"/>
</dbReference>
<dbReference type="SMR" id="Q32KN5"/>
<dbReference type="FunCoup" id="Q32KN5">
    <property type="interactions" value="2090"/>
</dbReference>
<dbReference type="STRING" id="9913.ENSBTAP00000068101"/>
<dbReference type="PaxDb" id="9913-ENSBTAP00000037496"/>
<dbReference type="Ensembl" id="ENSBTAT00000068279.2">
    <property type="protein sequence ID" value="ENSBTAP00000068101.1"/>
    <property type="gene ID" value="ENSBTAG00000049822.2"/>
</dbReference>
<dbReference type="GeneID" id="618379"/>
<dbReference type="KEGG" id="bta:618379"/>
<dbReference type="CTD" id="10126"/>
<dbReference type="VEuPathDB" id="HostDB:ENSBTAG00000049822"/>
<dbReference type="VGNC" id="VGNC:56196">
    <property type="gene designation" value="DNAL4"/>
</dbReference>
<dbReference type="eggNOG" id="KOG3430">
    <property type="taxonomic scope" value="Eukaryota"/>
</dbReference>
<dbReference type="GeneTree" id="ENSGT00940000166105"/>
<dbReference type="HOGENOM" id="CLU_204762_0_0_1"/>
<dbReference type="InParanoid" id="Q32KN5"/>
<dbReference type="OMA" id="CDMTDEM"/>
<dbReference type="OrthoDB" id="6506078at2759"/>
<dbReference type="Reactome" id="R-BTA-177504">
    <property type="pathway name" value="Retrograde neurotrophin signalling"/>
</dbReference>
<dbReference type="Proteomes" id="UP000009136">
    <property type="component" value="Chromosome 5"/>
</dbReference>
<dbReference type="Bgee" id="ENSBTAG00000049822">
    <property type="expression patterns" value="Expressed in olfactory segment of nasal mucosa and 102 other cell types or tissues"/>
</dbReference>
<dbReference type="GO" id="GO:0005929">
    <property type="term" value="C:cilium"/>
    <property type="evidence" value="ECO:0007669"/>
    <property type="project" value="UniProtKB-KW"/>
</dbReference>
<dbReference type="GO" id="GO:0005737">
    <property type="term" value="C:cytoplasm"/>
    <property type="evidence" value="ECO:0007669"/>
    <property type="project" value="UniProtKB-KW"/>
</dbReference>
<dbReference type="GO" id="GO:0030286">
    <property type="term" value="C:dynein complex"/>
    <property type="evidence" value="ECO:0007669"/>
    <property type="project" value="UniProtKB-KW"/>
</dbReference>
<dbReference type="GO" id="GO:0005874">
    <property type="term" value="C:microtubule"/>
    <property type="evidence" value="ECO:0007669"/>
    <property type="project" value="UniProtKB-KW"/>
</dbReference>
<dbReference type="GO" id="GO:0007017">
    <property type="term" value="P:microtubule-based process"/>
    <property type="evidence" value="ECO:0007669"/>
    <property type="project" value="InterPro"/>
</dbReference>
<dbReference type="CDD" id="cd21453">
    <property type="entry name" value="DLC-like_DNAL4"/>
    <property type="match status" value="1"/>
</dbReference>
<dbReference type="FunFam" id="3.30.740.10:FF:000002">
    <property type="entry name" value="Dynein light chain"/>
    <property type="match status" value="1"/>
</dbReference>
<dbReference type="Gene3D" id="3.30.740.10">
    <property type="entry name" value="Protein Inhibitor Of Neuronal Nitric Oxide Synthase"/>
    <property type="match status" value="1"/>
</dbReference>
<dbReference type="InterPro" id="IPR037177">
    <property type="entry name" value="DLC_sf"/>
</dbReference>
<dbReference type="InterPro" id="IPR001372">
    <property type="entry name" value="Dynein_light_chain_typ-1/2"/>
</dbReference>
<dbReference type="PANTHER" id="PTHR11886:SF2">
    <property type="entry name" value="DYNEIN AXONEMAL LIGHT CHAIN 4"/>
    <property type="match status" value="1"/>
</dbReference>
<dbReference type="PANTHER" id="PTHR11886">
    <property type="entry name" value="DYNEIN LIGHT CHAIN"/>
    <property type="match status" value="1"/>
</dbReference>
<dbReference type="Pfam" id="PF01221">
    <property type="entry name" value="Dynein_light"/>
    <property type="match status" value="1"/>
</dbReference>
<dbReference type="SMART" id="SM01375">
    <property type="entry name" value="Dynein_light"/>
    <property type="match status" value="1"/>
</dbReference>
<dbReference type="SUPFAM" id="SSF54648">
    <property type="entry name" value="DLC"/>
    <property type="match status" value="1"/>
</dbReference>
<sequence>MGETEGKKDEADYKRLQTFPLVRHSDMPEEMRVETMELCVTACEKFSNNNESAAKMIKETMDKKFGSSWHVVIGEGFGFEITHEVKNLLYLYFGGTLAVCVWKCS</sequence>
<comment type="function">
    <text evidence="1">Force generating protein of respiratory cilia. Produces force towards the minus ends of microtubules. Dynein has ATPase activity (By similarity).</text>
</comment>
<comment type="subunit">
    <text evidence="1">Consists of at least two heavy chains and a number of intermediate and light chains.</text>
</comment>
<comment type="subcellular location">
    <subcellularLocation>
        <location evidence="1">Cytoplasm</location>
        <location evidence="1">Cytoskeleton</location>
        <location evidence="1">Cilium axoneme</location>
    </subcellularLocation>
</comment>
<comment type="similarity">
    <text evidence="2">Belongs to the dynein light chain family.</text>
</comment>
<name>DNAL4_BOVIN</name>
<proteinExistence type="inferred from homology"/>
<evidence type="ECO:0000250" key="1"/>
<evidence type="ECO:0000305" key="2"/>
<feature type="chain" id="PRO_0000244523" description="Dynein axonemal light chain 4">
    <location>
        <begin position="1"/>
        <end position="105"/>
    </location>
</feature>
<organism>
    <name type="scientific">Bos taurus</name>
    <name type="common">Bovine</name>
    <dbReference type="NCBI Taxonomy" id="9913"/>
    <lineage>
        <taxon>Eukaryota</taxon>
        <taxon>Metazoa</taxon>
        <taxon>Chordata</taxon>
        <taxon>Craniata</taxon>
        <taxon>Vertebrata</taxon>
        <taxon>Euteleostomi</taxon>
        <taxon>Mammalia</taxon>
        <taxon>Eutheria</taxon>
        <taxon>Laurasiatheria</taxon>
        <taxon>Artiodactyla</taxon>
        <taxon>Ruminantia</taxon>
        <taxon>Pecora</taxon>
        <taxon>Bovidae</taxon>
        <taxon>Bovinae</taxon>
        <taxon>Bos</taxon>
    </lineage>
</organism>
<keyword id="KW-0966">Cell projection</keyword>
<keyword id="KW-0969">Cilium</keyword>
<keyword id="KW-0963">Cytoplasm</keyword>
<keyword id="KW-0206">Cytoskeleton</keyword>
<keyword id="KW-0243">Dynein</keyword>
<keyword id="KW-0493">Microtubule</keyword>
<keyword id="KW-0505">Motor protein</keyword>
<keyword id="KW-1185">Reference proteome</keyword>